<evidence type="ECO:0000250" key="1">
    <source>
        <dbReference type="UniProtKB" id="Q2G0X7"/>
    </source>
</evidence>
<evidence type="ECO:0000255" key="2"/>
<evidence type="ECO:0000256" key="3">
    <source>
        <dbReference type="SAM" id="MobiDB-lite"/>
    </source>
</evidence>
<evidence type="ECO:0000269" key="4">
    <source>
    </source>
</evidence>
<evidence type="ECO:0000269" key="5">
    <source>
    </source>
</evidence>
<evidence type="ECO:0000303" key="6">
    <source>
    </source>
</evidence>
<evidence type="ECO:0000305" key="7"/>
<evidence type="ECO:0007829" key="8">
    <source>
        <dbReference type="PDB" id="3URY"/>
    </source>
</evidence>
<organism>
    <name type="scientific">Staphylococcus aureus (strain NCTC 8325 / PS 47)</name>
    <dbReference type="NCBI Taxonomy" id="93061"/>
    <lineage>
        <taxon>Bacteria</taxon>
        <taxon>Bacillati</taxon>
        <taxon>Bacillota</taxon>
        <taxon>Bacilli</taxon>
        <taxon>Bacillales</taxon>
        <taxon>Staphylococcaceae</taxon>
        <taxon>Staphylococcus</taxon>
    </lineage>
</organism>
<feature type="signal peptide" evidence="2">
    <location>
        <begin position="1"/>
        <end position="30"/>
    </location>
</feature>
<feature type="chain" id="PRO_5004207852" description="Staphylococcal superantigen-like 4" evidence="2">
    <location>
        <begin position="31"/>
        <end position="308"/>
    </location>
</feature>
<feature type="region of interest" description="Disordered" evidence="3">
    <location>
        <begin position="32"/>
        <end position="117"/>
    </location>
</feature>
<feature type="region of interest" description="Sialyl Lewis X-binding" evidence="1">
    <location>
        <begin position="180"/>
        <end position="278"/>
    </location>
</feature>
<feature type="compositionally biased region" description="Polar residues" evidence="3">
    <location>
        <begin position="33"/>
        <end position="47"/>
    </location>
</feature>
<feature type="compositionally biased region" description="Polar residues" evidence="3">
    <location>
        <begin position="55"/>
        <end position="76"/>
    </location>
</feature>
<feature type="compositionally biased region" description="Low complexity" evidence="3">
    <location>
        <begin position="77"/>
        <end position="93"/>
    </location>
</feature>
<feature type="compositionally biased region" description="Polar residues" evidence="3">
    <location>
        <begin position="94"/>
        <end position="114"/>
    </location>
</feature>
<feature type="helix" evidence="8">
    <location>
        <begin position="118"/>
        <end position="120"/>
    </location>
</feature>
<feature type="helix" evidence="8">
    <location>
        <begin position="121"/>
        <end position="126"/>
    </location>
</feature>
<feature type="strand" evidence="8">
    <location>
        <begin position="132"/>
        <end position="141"/>
    </location>
</feature>
<feature type="strand" evidence="8">
    <location>
        <begin position="146"/>
        <end position="153"/>
    </location>
</feature>
<feature type="strand" evidence="8">
    <location>
        <begin position="155"/>
        <end position="158"/>
    </location>
</feature>
<feature type="strand" evidence="8">
    <location>
        <begin position="160"/>
        <end position="164"/>
    </location>
</feature>
<feature type="helix" evidence="8">
    <location>
        <begin position="168"/>
        <end position="171"/>
    </location>
</feature>
<feature type="strand" evidence="8">
    <location>
        <begin position="174"/>
        <end position="184"/>
    </location>
</feature>
<feature type="strand" evidence="8">
    <location>
        <begin position="194"/>
        <end position="198"/>
    </location>
</feature>
<feature type="strand" evidence="8">
    <location>
        <begin position="201"/>
        <end position="203"/>
    </location>
</feature>
<feature type="strand" evidence="8">
    <location>
        <begin position="211"/>
        <end position="220"/>
    </location>
</feature>
<feature type="strand" evidence="8">
    <location>
        <begin position="226"/>
        <end position="235"/>
    </location>
</feature>
<feature type="strand" evidence="8">
    <location>
        <begin position="238"/>
        <end position="241"/>
    </location>
</feature>
<feature type="helix" evidence="8">
    <location>
        <begin position="242"/>
        <end position="257"/>
    </location>
</feature>
<feature type="turn" evidence="8">
    <location>
        <begin position="259"/>
        <end position="261"/>
    </location>
</feature>
<feature type="strand" evidence="8">
    <location>
        <begin position="266"/>
        <end position="272"/>
    </location>
</feature>
<feature type="strand" evidence="8">
    <location>
        <begin position="277"/>
        <end position="281"/>
    </location>
</feature>
<feature type="helix" evidence="8">
    <location>
        <begin position="288"/>
        <end position="291"/>
    </location>
</feature>
<feature type="strand" evidence="8">
    <location>
        <begin position="294"/>
        <end position="296"/>
    </location>
</feature>
<feature type="helix" evidence="8">
    <location>
        <begin position="297"/>
        <end position="299"/>
    </location>
</feature>
<feature type="strand" evidence="8">
    <location>
        <begin position="300"/>
        <end position="307"/>
    </location>
</feature>
<gene>
    <name evidence="6" type="primary">ssl4</name>
    <name type="ordered locus">SAOUHSC_00389</name>
</gene>
<proteinExistence type="evidence at protein level"/>
<keyword id="KW-0002">3D-structure</keyword>
<keyword id="KW-1185">Reference proteome</keyword>
<keyword id="KW-0964">Secreted</keyword>
<keyword id="KW-0732">Signal</keyword>
<keyword id="KW-0843">Virulence</keyword>
<comment type="function">
    <text evidence="4 5">Secreted protein that plays a role in immune innate response inhibition by interfering with host TLR2-mediated pathway.</text>
</comment>
<comment type="subcellular location">
    <subcellularLocation>
        <location evidence="5">Secreted</location>
    </subcellularLocation>
</comment>
<comment type="domain">
    <text evidence="1">The C-terminal domain contains a V-shape binding site for sialyl Lewis X.</text>
</comment>
<comment type="similarity">
    <text evidence="7">Belongs to the staphylococcal/streptococcal toxin family.</text>
</comment>
<protein>
    <recommendedName>
        <fullName evidence="6">Staphylococcal superantigen-like 4</fullName>
    </recommendedName>
</protein>
<dbReference type="EMBL" id="CP000253">
    <property type="protein sequence ID" value="ABD29552.1"/>
    <property type="molecule type" value="Genomic_DNA"/>
</dbReference>
<dbReference type="RefSeq" id="WP_000705627.1">
    <property type="nucleotide sequence ID" value="NZ_LS483365.1"/>
</dbReference>
<dbReference type="RefSeq" id="YP_498975.1">
    <property type="nucleotide sequence ID" value="NC_007795.1"/>
</dbReference>
<dbReference type="PDB" id="3URY">
    <property type="method" value="X-ray"/>
    <property type="resolution" value="1.90 A"/>
    <property type="chains" value="A/B=116-308"/>
</dbReference>
<dbReference type="PDB" id="4RCO">
    <property type="method" value="X-ray"/>
    <property type="resolution" value="1.90 A"/>
    <property type="chains" value="A/B=31-308"/>
</dbReference>
<dbReference type="PDBsum" id="3URY"/>
<dbReference type="PDBsum" id="4RCO"/>
<dbReference type="SMR" id="Q2G1S8"/>
<dbReference type="STRING" id="93061.SAOUHSC_00389"/>
<dbReference type="PaxDb" id="1280-SAXN108_0480"/>
<dbReference type="GeneID" id="3919124"/>
<dbReference type="KEGG" id="sao:SAOUHSC_00389"/>
<dbReference type="PATRIC" id="fig|93061.5.peg.357"/>
<dbReference type="HOGENOM" id="CLU_054950_1_0_9"/>
<dbReference type="OrthoDB" id="2413502at2"/>
<dbReference type="EvolutionaryTrace" id="Q2G1S8"/>
<dbReference type="PHI-base" id="PHI:9749"/>
<dbReference type="Proteomes" id="UP000008816">
    <property type="component" value="Chromosome"/>
</dbReference>
<dbReference type="GO" id="GO:0005576">
    <property type="term" value="C:extracellular region"/>
    <property type="evidence" value="ECO:0007669"/>
    <property type="project" value="UniProtKB-SubCell"/>
</dbReference>
<dbReference type="Gene3D" id="2.40.50.110">
    <property type="match status" value="1"/>
</dbReference>
<dbReference type="Gene3D" id="3.10.20.120">
    <property type="match status" value="1"/>
</dbReference>
<dbReference type="InterPro" id="IPR008992">
    <property type="entry name" value="Enterotoxin"/>
</dbReference>
<dbReference type="InterPro" id="IPR015282">
    <property type="entry name" value="SSL_OB"/>
</dbReference>
<dbReference type="InterPro" id="IPR006126">
    <property type="entry name" value="Staph/Strept_toxin_CS"/>
</dbReference>
<dbReference type="InterPro" id="IPR008375">
    <property type="entry name" value="Staph_exotoxin"/>
</dbReference>
<dbReference type="InterPro" id="IPR016091">
    <property type="entry name" value="SuperAg_toxin_C"/>
</dbReference>
<dbReference type="InterPro" id="IPR013307">
    <property type="entry name" value="Superantigen_bac"/>
</dbReference>
<dbReference type="InterPro" id="IPR006123">
    <property type="entry name" value="Toxin_b-grasp_Staph/Strep"/>
</dbReference>
<dbReference type="NCBIfam" id="NF009600">
    <property type="entry name" value="PRK13042.1"/>
    <property type="match status" value="1"/>
</dbReference>
<dbReference type="Pfam" id="PF09199">
    <property type="entry name" value="SSL_OB"/>
    <property type="match status" value="1"/>
</dbReference>
<dbReference type="Pfam" id="PF02876">
    <property type="entry name" value="Stap_Strp_tox_C"/>
    <property type="match status" value="1"/>
</dbReference>
<dbReference type="PRINTS" id="PR01898">
    <property type="entry name" value="SAGSUPRFAMLY"/>
</dbReference>
<dbReference type="PRINTS" id="PR01800">
    <property type="entry name" value="STAPHEXOTOXN"/>
</dbReference>
<dbReference type="PRINTS" id="PR01501">
    <property type="entry name" value="TOXICSSTOXIN"/>
</dbReference>
<dbReference type="SUPFAM" id="SSF50203">
    <property type="entry name" value="Bacterial enterotoxins"/>
    <property type="match status" value="1"/>
</dbReference>
<dbReference type="SUPFAM" id="SSF54334">
    <property type="entry name" value="Superantigen toxins, C-terminal domain"/>
    <property type="match status" value="1"/>
</dbReference>
<dbReference type="PROSITE" id="PS00278">
    <property type="entry name" value="STAPH_STREP_TOXIN_2"/>
    <property type="match status" value="1"/>
</dbReference>
<name>SSL4_STAA8</name>
<accession>Q2G1S8</accession>
<reference key="1">
    <citation type="book" date="2006" name="Gram positive pathogens, 2nd edition">
        <title>The Staphylococcus aureus NCTC 8325 genome.</title>
        <editorList>
            <person name="Fischetti V."/>
            <person name="Novick R."/>
            <person name="Ferretti J."/>
            <person name="Portnoy D."/>
            <person name="Rood J."/>
        </editorList>
        <authorList>
            <person name="Gillaspy A.F."/>
            <person name="Worrell V."/>
            <person name="Orvis J."/>
            <person name="Roe B.A."/>
            <person name="Dyer D.W."/>
            <person name="Iandolo J.J."/>
        </authorList>
    </citation>
    <scope>NUCLEOTIDE SEQUENCE [LARGE SCALE GENOMIC DNA]</scope>
    <source>
        <strain>NCTC 8325 / PS 47</strain>
    </source>
</reference>
<reference key="2">
    <citation type="journal article" date="2012" name="J. Mol. Med.">
        <title>Evasion of Toll-like receptor 2 activation by staphylococcal superantigen-like protein 3.</title>
        <authorList>
            <person name="Bardoel B.W."/>
            <person name="Vos R."/>
            <person name="Bouman T."/>
            <person name="Aerts P.C."/>
            <person name="Bestebroer J."/>
            <person name="Huizinga E.G."/>
            <person name="Brondijk T.H."/>
            <person name="van Strijp J.A."/>
            <person name="de Haas C.J."/>
        </authorList>
    </citation>
    <scope>FUNCTION</scope>
    <source>
        <strain>NCTC 8325 / PS 47</strain>
    </source>
</reference>
<reference key="3">
    <citation type="journal article" date="2017" name="J. Innate Immun.">
        <title>The TLR2 Antagonist Staphylococcal Superantigen-Like Protein 3 Acts as a Virulence Factor to Promote Bacterial Pathogenicity in vivo.</title>
        <authorList>
            <person name="Koymans K.J."/>
            <person name="Goldmann O."/>
            <person name="Karlsson C.A.Q."/>
            <person name="Sital W."/>
            <person name="Thaenert R."/>
            <person name="Bisschop A."/>
            <person name="Vrieling M."/>
            <person name="Malmstroem J."/>
            <person name="van Kessel K.P.M."/>
            <person name="de Haas C.J.C."/>
            <person name="van Strijp J.A.G."/>
            <person name="Medina E."/>
        </authorList>
    </citation>
    <scope>FUNCTION</scope>
    <scope>SUBCELLULAR LOCATION</scope>
    <source>
        <strain>NCTC 8325 / PS 47</strain>
    </source>
</reference>
<reference key="4">
    <citation type="submission" date="2011-11" db="PDB data bank">
        <title>Crystal Structure of Superantigen-like Protein, Exotoxin from Staphylococcus aureus subsp. aureus NCTC 8325.</title>
        <authorList>
            <consortium name="Center for Structural Genomics of Infectious Diseases (CSGID)"/>
            <person name="Filippova E.V."/>
            <person name="Minasov G."/>
            <person name="Shuvalova L."/>
            <person name="Halavaty A."/>
            <person name="Winsor J."/>
            <person name="Dubrovska I."/>
            <person name="Bagnoli F."/>
            <person name="Falugi F."/>
            <person name="Bottomley M."/>
            <person name="Grandi G."/>
            <person name="Anderson W.F."/>
        </authorList>
    </citation>
    <scope>X-RAY CRYSTALLOGRAPHY (1.90 ANGSTROMS) OF 116-308</scope>
</reference>
<reference key="5">
    <citation type="submission" date="2014-09" db="PDB data bank">
        <title>1.9 Angstrom Crystal Structure of Superantigen-like Protein, Exotoxin from Staphylococcus aureus, in Complex with Sialyl-LewisX.</title>
        <authorList>
            <consortium name="Center for Structural Genomics of Infectious Diseases (CSGID)"/>
            <person name="Minasov G."/>
            <person name="Nocadello S."/>
            <person name="Shuvalova L."/>
            <person name="Filippova E."/>
            <person name="Halavaty A."/>
            <person name="Dubrovska I."/>
            <person name="Flores K."/>
            <person name="Bagnoli F."/>
            <person name="Falugi F."/>
            <person name="Bottomley M."/>
            <person name="Grandi G."/>
            <person name="Anderson W.F."/>
        </authorList>
    </citation>
    <scope>X-RAY CRYSTALLOGRAPHY (1.90 ANGSTROMS) OF 31-308</scope>
</reference>
<sequence length="308" mass="34072">MKITTIAKTSLALGLLTTGVITTTTQAANATTLSSTKVEAPQSTPPSTKIEAPQSKPNATTPPSTKVEAPQQTANATTPPSTKVTTPPSTNTPQPMQSTKSDTPQSPTTKQVPTEINPKFKDLRAYYTKPSLEFKNEIGIILKKWTTIRFMNVVPDYFIYKIALVGKDDKKYGEGVHRNVDVFVVLEENNYNLEKYSVGGITKSNSKKVDHKAGVRITKEDNKGTISHDVSEFKITKEQISLKELDFKLRKQLIEKNNLYGNVGSGKIVIKMKNGGKYTFELHKKLQENRMADVIDGTNIDNIEVNIK</sequence>